<sequence length="318" mass="34400">MTCKIIGCGGYLPSKIVSNDELAKFVDTNDEWIRTRTGITQRHIAGDTEYTSHLALKSAEKAIADAGISVNDIDLIITCTTTPDNSFPSVASKLQGYLGLTNIPSFDLQAVCAGFVYGLQVANSLISSDKYKTILLIGAEKMTSLLDWNDRTTCVLFGDGAGSVILQRSSDDSGLIDSNIFSSGADYDEILYTNGGVSMNGISGKIVMQGQKLFRHAIEKMQQSIKDLLHANQFSVSDIDYFIPHQANIRIINKLAELLNIEEHKVVKTVDKHANCSAASIPLALSTLKASGKIKKGDILLFSAIGAGLTWGSAFIRW</sequence>
<keyword id="KW-0012">Acyltransferase</keyword>
<keyword id="KW-0963">Cytoplasm</keyword>
<keyword id="KW-0275">Fatty acid biosynthesis</keyword>
<keyword id="KW-0276">Fatty acid metabolism</keyword>
<keyword id="KW-0444">Lipid biosynthesis</keyword>
<keyword id="KW-0443">Lipid metabolism</keyword>
<keyword id="KW-0511">Multifunctional enzyme</keyword>
<keyword id="KW-0808">Transferase</keyword>
<reference key="1">
    <citation type="journal article" date="2001" name="Science">
        <title>Mechanisms of evolution in Rickettsia conorii and R. prowazekii.</title>
        <authorList>
            <person name="Ogata H."/>
            <person name="Audic S."/>
            <person name="Renesto-Audiffren P."/>
            <person name="Fournier P.-E."/>
            <person name="Barbe V."/>
            <person name="Samson D."/>
            <person name="Roux V."/>
            <person name="Cossart P."/>
            <person name="Weissenbach J."/>
            <person name="Claverie J.-M."/>
            <person name="Raoult D."/>
        </authorList>
    </citation>
    <scope>NUCLEOTIDE SEQUENCE [LARGE SCALE GENOMIC DNA]</scope>
    <source>
        <strain>ATCC VR-613 / Malish 7</strain>
    </source>
</reference>
<proteinExistence type="inferred from homology"/>
<protein>
    <recommendedName>
        <fullName evidence="1">Beta-ketoacyl-[acyl-carrier-protein] synthase III</fullName>
        <shortName evidence="1">Beta-ketoacyl-ACP synthase III</shortName>
        <shortName evidence="1">KAS III</shortName>
        <ecNumber evidence="1">2.3.1.180</ecNumber>
    </recommendedName>
    <alternativeName>
        <fullName evidence="1">3-oxoacyl-[acyl-carrier-protein] synthase 3</fullName>
    </alternativeName>
    <alternativeName>
        <fullName evidence="1">3-oxoacyl-[acyl-carrier-protein] synthase III</fullName>
    </alternativeName>
</protein>
<accession>Q92GC1</accession>
<dbReference type="EC" id="2.3.1.180" evidence="1"/>
<dbReference type="EMBL" id="AE006914">
    <property type="protein sequence ID" value="AAL03740.1"/>
    <property type="molecule type" value="Genomic_DNA"/>
</dbReference>
<dbReference type="PIR" id="B97850">
    <property type="entry name" value="B97850"/>
</dbReference>
<dbReference type="RefSeq" id="WP_010977768.1">
    <property type="nucleotide sequence ID" value="NC_003103.1"/>
</dbReference>
<dbReference type="SMR" id="Q92GC1"/>
<dbReference type="GeneID" id="928349"/>
<dbReference type="KEGG" id="rco:RC1202"/>
<dbReference type="HOGENOM" id="CLU_039592_3_1_5"/>
<dbReference type="UniPathway" id="UPA00094"/>
<dbReference type="Proteomes" id="UP000000816">
    <property type="component" value="Chromosome"/>
</dbReference>
<dbReference type="GO" id="GO:0005737">
    <property type="term" value="C:cytoplasm"/>
    <property type="evidence" value="ECO:0007669"/>
    <property type="project" value="UniProtKB-SubCell"/>
</dbReference>
<dbReference type="GO" id="GO:0004315">
    <property type="term" value="F:3-oxoacyl-[acyl-carrier-protein] synthase activity"/>
    <property type="evidence" value="ECO:0007669"/>
    <property type="project" value="InterPro"/>
</dbReference>
<dbReference type="GO" id="GO:0033818">
    <property type="term" value="F:beta-ketoacyl-acyl-carrier-protein synthase III activity"/>
    <property type="evidence" value="ECO:0007669"/>
    <property type="project" value="UniProtKB-UniRule"/>
</dbReference>
<dbReference type="GO" id="GO:0006633">
    <property type="term" value="P:fatty acid biosynthetic process"/>
    <property type="evidence" value="ECO:0007669"/>
    <property type="project" value="UniProtKB-UniRule"/>
</dbReference>
<dbReference type="GO" id="GO:0044550">
    <property type="term" value="P:secondary metabolite biosynthetic process"/>
    <property type="evidence" value="ECO:0007669"/>
    <property type="project" value="TreeGrafter"/>
</dbReference>
<dbReference type="CDD" id="cd00830">
    <property type="entry name" value="KAS_III"/>
    <property type="match status" value="1"/>
</dbReference>
<dbReference type="FunFam" id="3.40.47.10:FF:000004">
    <property type="entry name" value="3-oxoacyl-[acyl-carrier-protein] synthase 3"/>
    <property type="match status" value="1"/>
</dbReference>
<dbReference type="Gene3D" id="3.40.47.10">
    <property type="match status" value="1"/>
</dbReference>
<dbReference type="HAMAP" id="MF_01815">
    <property type="entry name" value="FabH"/>
    <property type="match status" value="1"/>
</dbReference>
<dbReference type="InterPro" id="IPR013747">
    <property type="entry name" value="ACP_syn_III_C"/>
</dbReference>
<dbReference type="InterPro" id="IPR013751">
    <property type="entry name" value="ACP_syn_III_N"/>
</dbReference>
<dbReference type="InterPro" id="IPR004655">
    <property type="entry name" value="FabH"/>
</dbReference>
<dbReference type="InterPro" id="IPR016039">
    <property type="entry name" value="Thiolase-like"/>
</dbReference>
<dbReference type="NCBIfam" id="TIGR00747">
    <property type="entry name" value="fabH"/>
    <property type="match status" value="1"/>
</dbReference>
<dbReference type="NCBIfam" id="NF006829">
    <property type="entry name" value="PRK09352.1"/>
    <property type="match status" value="1"/>
</dbReference>
<dbReference type="PANTHER" id="PTHR34069">
    <property type="entry name" value="3-OXOACYL-[ACYL-CARRIER-PROTEIN] SYNTHASE 3"/>
    <property type="match status" value="1"/>
</dbReference>
<dbReference type="PANTHER" id="PTHR34069:SF2">
    <property type="entry name" value="BETA-KETOACYL-[ACYL-CARRIER-PROTEIN] SYNTHASE III"/>
    <property type="match status" value="1"/>
</dbReference>
<dbReference type="Pfam" id="PF08545">
    <property type="entry name" value="ACP_syn_III"/>
    <property type="match status" value="1"/>
</dbReference>
<dbReference type="Pfam" id="PF08541">
    <property type="entry name" value="ACP_syn_III_C"/>
    <property type="match status" value="1"/>
</dbReference>
<dbReference type="SUPFAM" id="SSF53901">
    <property type="entry name" value="Thiolase-like"/>
    <property type="match status" value="1"/>
</dbReference>
<evidence type="ECO:0000255" key="1">
    <source>
        <dbReference type="HAMAP-Rule" id="MF_01815"/>
    </source>
</evidence>
<name>FABH_RICCN</name>
<comment type="function">
    <text evidence="1">Catalyzes the condensation reaction of fatty acid synthesis by the addition to an acyl acceptor of two carbons from malonyl-ACP. Catalyzes the first condensation reaction which initiates fatty acid synthesis and may therefore play a role in governing the total rate of fatty acid production. Possesses both acetoacetyl-ACP synthase and acetyl transacylase activities. Its substrate specificity determines the biosynthesis of branched-chain and/or straight-chain of fatty acids.</text>
</comment>
<comment type="catalytic activity">
    <reaction evidence="1">
        <text>malonyl-[ACP] + acetyl-CoA + H(+) = 3-oxobutanoyl-[ACP] + CO2 + CoA</text>
        <dbReference type="Rhea" id="RHEA:12080"/>
        <dbReference type="Rhea" id="RHEA-COMP:9623"/>
        <dbReference type="Rhea" id="RHEA-COMP:9625"/>
        <dbReference type="ChEBI" id="CHEBI:15378"/>
        <dbReference type="ChEBI" id="CHEBI:16526"/>
        <dbReference type="ChEBI" id="CHEBI:57287"/>
        <dbReference type="ChEBI" id="CHEBI:57288"/>
        <dbReference type="ChEBI" id="CHEBI:78449"/>
        <dbReference type="ChEBI" id="CHEBI:78450"/>
        <dbReference type="EC" id="2.3.1.180"/>
    </reaction>
</comment>
<comment type="pathway">
    <text evidence="1">Lipid metabolism; fatty acid biosynthesis.</text>
</comment>
<comment type="subunit">
    <text evidence="1">Homodimer.</text>
</comment>
<comment type="subcellular location">
    <subcellularLocation>
        <location evidence="1">Cytoplasm</location>
    </subcellularLocation>
</comment>
<comment type="domain">
    <text evidence="1">The last Arg residue of the ACP-binding site is essential for the weak association between ACP/AcpP and FabH.</text>
</comment>
<comment type="similarity">
    <text evidence="1">Belongs to the thiolase-like superfamily. FabH family.</text>
</comment>
<gene>
    <name evidence="1" type="primary">fabH</name>
    <name type="ordered locus">RC1202</name>
</gene>
<organism>
    <name type="scientific">Rickettsia conorii (strain ATCC VR-613 / Malish 7)</name>
    <dbReference type="NCBI Taxonomy" id="272944"/>
    <lineage>
        <taxon>Bacteria</taxon>
        <taxon>Pseudomonadati</taxon>
        <taxon>Pseudomonadota</taxon>
        <taxon>Alphaproteobacteria</taxon>
        <taxon>Rickettsiales</taxon>
        <taxon>Rickettsiaceae</taxon>
        <taxon>Rickettsieae</taxon>
        <taxon>Rickettsia</taxon>
        <taxon>spotted fever group</taxon>
    </lineage>
</organism>
<feature type="chain" id="PRO_0000110461" description="Beta-ketoacyl-[acyl-carrier-protein] synthase III">
    <location>
        <begin position="1"/>
        <end position="318"/>
    </location>
</feature>
<feature type="region of interest" description="ACP-binding" evidence="1">
    <location>
        <begin position="246"/>
        <end position="250"/>
    </location>
</feature>
<feature type="active site" evidence="1">
    <location>
        <position position="112"/>
    </location>
</feature>
<feature type="active site" evidence="1">
    <location>
        <position position="245"/>
    </location>
</feature>
<feature type="active site" evidence="1">
    <location>
        <position position="275"/>
    </location>
</feature>